<organism>
    <name type="scientific">Methanocaldococcus jannaschii (strain ATCC 43067 / DSM 2661 / JAL-1 / JCM 10045 / NBRC 100440)</name>
    <name type="common">Methanococcus jannaschii</name>
    <dbReference type="NCBI Taxonomy" id="243232"/>
    <lineage>
        <taxon>Archaea</taxon>
        <taxon>Methanobacteriati</taxon>
        <taxon>Methanobacteriota</taxon>
        <taxon>Methanomada group</taxon>
        <taxon>Methanococci</taxon>
        <taxon>Methanococcales</taxon>
        <taxon>Methanocaldococcaceae</taxon>
        <taxon>Methanocaldococcus</taxon>
    </lineage>
</organism>
<protein>
    <recommendedName>
        <fullName>Uncharacterized aminotransferase MJ0959</fullName>
        <ecNumber>2.6.1.-</ecNumber>
    </recommendedName>
</protein>
<name>Y959_METJA</name>
<dbReference type="EC" id="2.6.1.-"/>
<dbReference type="EMBL" id="L77117">
    <property type="protein sequence ID" value="AAB98961.1"/>
    <property type="molecule type" value="Genomic_DNA"/>
</dbReference>
<dbReference type="PIR" id="G64419">
    <property type="entry name" value="G64419"/>
</dbReference>
<dbReference type="RefSeq" id="WP_010870473.1">
    <property type="nucleotide sequence ID" value="NC_000909.1"/>
</dbReference>
<dbReference type="SMR" id="Q58369"/>
<dbReference type="FunCoup" id="Q58369">
    <property type="interactions" value="79"/>
</dbReference>
<dbReference type="STRING" id="243232.MJ_0959"/>
<dbReference type="PaxDb" id="243232-MJ_0959"/>
<dbReference type="EnsemblBacteria" id="AAB98961">
    <property type="protein sequence ID" value="AAB98961"/>
    <property type="gene ID" value="MJ_0959"/>
</dbReference>
<dbReference type="GeneID" id="1451857"/>
<dbReference type="KEGG" id="mja:MJ_0959"/>
<dbReference type="eggNOG" id="arCOG00082">
    <property type="taxonomic scope" value="Archaea"/>
</dbReference>
<dbReference type="HOGENOM" id="CLU_027686_1_1_2"/>
<dbReference type="InParanoid" id="Q58369"/>
<dbReference type="OrthoDB" id="35685at2157"/>
<dbReference type="PhylomeDB" id="Q58369"/>
<dbReference type="BioCyc" id="MetaCyc:MONOMER-15919"/>
<dbReference type="Proteomes" id="UP000000805">
    <property type="component" value="Chromosome"/>
</dbReference>
<dbReference type="GO" id="GO:0008453">
    <property type="term" value="F:alanine-glyoxylate transaminase activity"/>
    <property type="evidence" value="ECO:0000318"/>
    <property type="project" value="GO_Central"/>
</dbReference>
<dbReference type="GO" id="GO:0004760">
    <property type="term" value="F:L-serine-pyruvate transaminase activity"/>
    <property type="evidence" value="ECO:0000318"/>
    <property type="project" value="GO_Central"/>
</dbReference>
<dbReference type="GO" id="GO:0019265">
    <property type="term" value="P:glycine biosynthetic process, by transamination of glyoxylate"/>
    <property type="evidence" value="ECO:0000318"/>
    <property type="project" value="GO_Central"/>
</dbReference>
<dbReference type="CDD" id="cd06451">
    <property type="entry name" value="AGAT_like"/>
    <property type="match status" value="1"/>
</dbReference>
<dbReference type="FunFam" id="3.90.1150.10:FF:000031">
    <property type="entry name" value="Serine--glyoxylate aminotransferase"/>
    <property type="match status" value="1"/>
</dbReference>
<dbReference type="FunFam" id="3.40.640.10:FF:000027">
    <property type="entry name" value="Serine--pyruvate aminotransferase, mitochondrial"/>
    <property type="match status" value="1"/>
</dbReference>
<dbReference type="Gene3D" id="3.90.1150.10">
    <property type="entry name" value="Aspartate Aminotransferase, domain 1"/>
    <property type="match status" value="1"/>
</dbReference>
<dbReference type="Gene3D" id="3.40.640.10">
    <property type="entry name" value="Type I PLP-dependent aspartate aminotransferase-like (Major domain)"/>
    <property type="match status" value="1"/>
</dbReference>
<dbReference type="InterPro" id="IPR000192">
    <property type="entry name" value="Aminotrans_V_dom"/>
</dbReference>
<dbReference type="InterPro" id="IPR015424">
    <property type="entry name" value="PyrdxlP-dep_Trfase"/>
</dbReference>
<dbReference type="InterPro" id="IPR015421">
    <property type="entry name" value="PyrdxlP-dep_Trfase_major"/>
</dbReference>
<dbReference type="InterPro" id="IPR015422">
    <property type="entry name" value="PyrdxlP-dep_Trfase_small"/>
</dbReference>
<dbReference type="InterPro" id="IPR024169">
    <property type="entry name" value="SP_NH2Trfase/AEP_transaminase"/>
</dbReference>
<dbReference type="PANTHER" id="PTHR21152:SF24">
    <property type="entry name" value="ALANINE--GLYOXYLATE AMINOTRANSFERASE 1"/>
    <property type="match status" value="1"/>
</dbReference>
<dbReference type="PANTHER" id="PTHR21152">
    <property type="entry name" value="AMINOTRANSFERASE CLASS V"/>
    <property type="match status" value="1"/>
</dbReference>
<dbReference type="Pfam" id="PF00266">
    <property type="entry name" value="Aminotran_5"/>
    <property type="match status" value="1"/>
</dbReference>
<dbReference type="PIRSF" id="PIRSF000524">
    <property type="entry name" value="SPT"/>
    <property type="match status" value="1"/>
</dbReference>
<dbReference type="SUPFAM" id="SSF53383">
    <property type="entry name" value="PLP-dependent transferases"/>
    <property type="match status" value="1"/>
</dbReference>
<reference key="1">
    <citation type="journal article" date="1996" name="Science">
        <title>Complete genome sequence of the methanogenic archaeon, Methanococcus jannaschii.</title>
        <authorList>
            <person name="Bult C.J."/>
            <person name="White O."/>
            <person name="Olsen G.J."/>
            <person name="Zhou L."/>
            <person name="Fleischmann R.D."/>
            <person name="Sutton G.G."/>
            <person name="Blake J.A."/>
            <person name="FitzGerald L.M."/>
            <person name="Clayton R.A."/>
            <person name="Gocayne J.D."/>
            <person name="Kerlavage A.R."/>
            <person name="Dougherty B.A."/>
            <person name="Tomb J.-F."/>
            <person name="Adams M.D."/>
            <person name="Reich C.I."/>
            <person name="Overbeek R."/>
            <person name="Kirkness E.F."/>
            <person name="Weinstock K.G."/>
            <person name="Merrick J.M."/>
            <person name="Glodek A."/>
            <person name="Scott J.L."/>
            <person name="Geoghagen N.S.M."/>
            <person name="Weidman J.F."/>
            <person name="Fuhrmann J.L."/>
            <person name="Nguyen D."/>
            <person name="Utterback T.R."/>
            <person name="Kelley J.M."/>
            <person name="Peterson J.D."/>
            <person name="Sadow P.W."/>
            <person name="Hanna M.C."/>
            <person name="Cotton M.D."/>
            <person name="Roberts K.M."/>
            <person name="Hurst M.A."/>
            <person name="Kaine B.P."/>
            <person name="Borodovsky M."/>
            <person name="Klenk H.-P."/>
            <person name="Fraser C.M."/>
            <person name="Smith H.O."/>
            <person name="Woese C.R."/>
            <person name="Venter J.C."/>
        </authorList>
    </citation>
    <scope>NUCLEOTIDE SEQUENCE [LARGE SCALE GENOMIC DNA]</scope>
    <source>
        <strain>ATCC 43067 / DSM 2661 / JAL-1 / JCM 10045 / NBRC 100440</strain>
    </source>
</reference>
<sequence length="385" mass="42413">MKIDAVKKLLMIPGPTMVPPEVLNAMALPVIGHRTKDYSNLLEDTIEKLKKVFITENDTFLITGSGTAAMDMAISNIIKRGDKVLNIVTGNFGERFANIVKAYKGEAIRLDVEWGDMAEPEAVKEILDKYDDIKAVTVVHNETSTGARNPIKEIGEVVKDYDALYIVDTVSSLGGDYVNVDKFHIDICVTGSQKCLAAPPGLAAITVSEKAWEVIKKNDDKVGFYLDLLAYKKYYEEKKQTPYTPSVNLTYALNVALDLVLEEGIENRVKRHERLAKATRAGLEAMGIELFAKERARSVTVTSAKYPEGIEDSKFRGILSNKYNIVVAGGQKHLAGKIFRIGHMGICGEKEVLATLACVELALKELGFEVKESGVEVAKEVLLKE</sequence>
<accession>Q58369</accession>
<keyword id="KW-0032">Aminotransferase</keyword>
<keyword id="KW-0663">Pyridoxal phosphate</keyword>
<keyword id="KW-1185">Reference proteome</keyword>
<keyword id="KW-0808">Transferase</keyword>
<evidence type="ECO:0000250" key="1"/>
<evidence type="ECO:0000255" key="2"/>
<evidence type="ECO:0000305" key="3"/>
<gene>
    <name type="ordered locus">MJ0959</name>
</gene>
<comment type="cofactor">
    <cofactor evidence="1">
        <name>pyridoxal 5'-phosphate</name>
        <dbReference type="ChEBI" id="CHEBI:597326"/>
    </cofactor>
</comment>
<comment type="similarity">
    <text evidence="3">Belongs to the class-V pyridoxal-phosphate-dependent aminotransferase family.</text>
</comment>
<feature type="chain" id="PRO_0000150343" description="Uncharacterized aminotransferase MJ0959">
    <location>
        <begin position="1"/>
        <end position="385"/>
    </location>
</feature>
<feature type="modified residue" description="N6-(pyridoxal phosphate)lysine" evidence="2">
    <location>
        <position position="194"/>
    </location>
</feature>
<proteinExistence type="inferred from homology"/>